<keyword id="KW-0175">Coiled coil</keyword>
<keyword id="KW-0597">Phosphoprotein</keyword>
<keyword id="KW-1185">Reference proteome</keyword>
<name>PKHO2_BOVIN</name>
<reference key="1">
    <citation type="submission" date="2005-11" db="EMBL/GenBank/DDBJ databases">
        <authorList>
            <consortium name="NIH - Mammalian Gene Collection (MGC) project"/>
        </authorList>
    </citation>
    <scope>NUCLEOTIDE SEQUENCE [LARGE SCALE MRNA]</scope>
    <source>
        <strain>Crossbred X Angus</strain>
        <tissue>Ileum</tissue>
    </source>
</reference>
<reference key="2">
    <citation type="journal article" date="2005" name="BMC Genomics">
        <title>Characterization of 954 bovine full-CDS cDNA sequences.</title>
        <authorList>
            <person name="Harhay G.P."/>
            <person name="Sonstegard T.S."/>
            <person name="Keele J.W."/>
            <person name="Heaton M.P."/>
            <person name="Clawson M.L."/>
            <person name="Snelling W.M."/>
            <person name="Wiedmann R.T."/>
            <person name="Van Tassell C.P."/>
            <person name="Smith T.P.L."/>
        </authorList>
    </citation>
    <scope>NUCLEOTIDE SEQUENCE [LARGE SCALE MRNA] OF 67-499</scope>
</reference>
<protein>
    <recommendedName>
        <fullName>Pleckstrin homology domain-containing family O member 2</fullName>
        <shortName>PH domain-containing family O member 2</shortName>
    </recommendedName>
    <alternativeName>
        <fullName>Pleckstrin homology domain-containing family Q member 1</fullName>
        <shortName>PH domain-containing family Q member 1</shortName>
    </alternativeName>
</protein>
<accession>Q32LQ1</accession>
<accession>Q0V8J7</accession>
<sequence length="499" mass="54119">MEEEGVKEGGQRPRSAQTADKAGWIKKSSGGFLGLWKDRYLLLCQAQLLVYENEDEQKCVETVELGSYEKCQDLRALLKRKHRFILLRSPGNKVSDIKFQAPSGEEKESWIKALNEGINRGKNKAFDEVKVDKSCVLEHVTRDRVRRDQRRRPPTRVHLKEVANAASDGLSRLDLDVPDSGPPVLAPSNDVDAAQPRETPRPPMPPAKPSPAPETSSAGDRMETPVGQSAPAPVPASSEAHPGSQEDLETPVVEDSDSEQPPNRILPDKLKVSWENPSPEEAPDSESAEPPQVPGAETSEAGPREGGKPPTPPPKILSEKLKASMSGMEASGPAQSPGASEASAPGPAEVSVNGVDDSPEPLQSSQAAGPPGTPPKAATTSTTLPPWDLQPQLHPRCSSLGDLLGEGPRRRRQPGEQLHRAQLEVKVASEKTEKLLNKVLGGESASVNAETLLSQAVEQLRQATQVLQEIRDLEEMNREAPGLREKRRELVTLYRRSVP</sequence>
<organism>
    <name type="scientific">Bos taurus</name>
    <name type="common">Bovine</name>
    <dbReference type="NCBI Taxonomy" id="9913"/>
    <lineage>
        <taxon>Eukaryota</taxon>
        <taxon>Metazoa</taxon>
        <taxon>Chordata</taxon>
        <taxon>Craniata</taxon>
        <taxon>Vertebrata</taxon>
        <taxon>Euteleostomi</taxon>
        <taxon>Mammalia</taxon>
        <taxon>Eutheria</taxon>
        <taxon>Laurasiatheria</taxon>
        <taxon>Artiodactyla</taxon>
        <taxon>Ruminantia</taxon>
        <taxon>Pecora</taxon>
        <taxon>Bovidae</taxon>
        <taxon>Bovinae</taxon>
        <taxon>Bos</taxon>
    </lineage>
</organism>
<dbReference type="EMBL" id="BC109475">
    <property type="protein sequence ID" value="AAI09476.1"/>
    <property type="molecule type" value="mRNA"/>
</dbReference>
<dbReference type="EMBL" id="BT026221">
    <property type="protein sequence ID" value="ABG67060.1"/>
    <property type="molecule type" value="mRNA"/>
</dbReference>
<dbReference type="RefSeq" id="NP_001069751.1">
    <property type="nucleotide sequence ID" value="NM_001076283.2"/>
</dbReference>
<dbReference type="SMR" id="Q32LQ1"/>
<dbReference type="FunCoup" id="Q32LQ1">
    <property type="interactions" value="959"/>
</dbReference>
<dbReference type="STRING" id="9913.ENSBTAP00000069888"/>
<dbReference type="PaxDb" id="9913-ENSBTAP00000011069"/>
<dbReference type="GeneID" id="613696"/>
<dbReference type="KEGG" id="bta:613696"/>
<dbReference type="CTD" id="80301"/>
<dbReference type="eggNOG" id="ENOG502QVFF">
    <property type="taxonomic scope" value="Eukaryota"/>
</dbReference>
<dbReference type="InParanoid" id="Q32LQ1"/>
<dbReference type="OrthoDB" id="8860305at2759"/>
<dbReference type="Proteomes" id="UP000009136">
    <property type="component" value="Unplaced"/>
</dbReference>
<dbReference type="GO" id="GO:0071888">
    <property type="term" value="P:macrophage apoptotic process"/>
    <property type="evidence" value="ECO:0000318"/>
    <property type="project" value="GO_Central"/>
</dbReference>
<dbReference type="CDD" id="cd13317">
    <property type="entry name" value="PH_PLEKHO1_PLEKHO2"/>
    <property type="match status" value="1"/>
</dbReference>
<dbReference type="Gene3D" id="2.30.29.30">
    <property type="entry name" value="Pleckstrin-homology domain (PH domain)/Phosphotyrosine-binding domain (PTB)"/>
    <property type="match status" value="1"/>
</dbReference>
<dbReference type="InterPro" id="IPR011993">
    <property type="entry name" value="PH-like_dom_sf"/>
</dbReference>
<dbReference type="InterPro" id="IPR001849">
    <property type="entry name" value="PH_domain"/>
</dbReference>
<dbReference type="InterPro" id="IPR043448">
    <property type="entry name" value="PKHO1/2"/>
</dbReference>
<dbReference type="PANTHER" id="PTHR15871">
    <property type="entry name" value="PH DOMAIN-CONTAINING PROTEIN"/>
    <property type="match status" value="1"/>
</dbReference>
<dbReference type="PANTHER" id="PTHR15871:SF2">
    <property type="entry name" value="PLECKSTRIN HOMOLOGY DOMAIN-CONTAINING FAMILY O MEMBER 2"/>
    <property type="match status" value="1"/>
</dbReference>
<dbReference type="Pfam" id="PF00169">
    <property type="entry name" value="PH"/>
    <property type="match status" value="1"/>
</dbReference>
<dbReference type="SMART" id="SM00233">
    <property type="entry name" value="PH"/>
    <property type="match status" value="1"/>
</dbReference>
<dbReference type="SUPFAM" id="SSF50729">
    <property type="entry name" value="PH domain-like"/>
    <property type="match status" value="1"/>
</dbReference>
<dbReference type="PROSITE" id="PS50003">
    <property type="entry name" value="PH_DOMAIN"/>
    <property type="match status" value="1"/>
</dbReference>
<feature type="chain" id="PRO_0000309482" description="Pleckstrin homology domain-containing family O member 2">
    <location>
        <begin position="1"/>
        <end position="499"/>
    </location>
</feature>
<feature type="domain" description="PH" evidence="4">
    <location>
        <begin position="18"/>
        <end position="119"/>
    </location>
</feature>
<feature type="region of interest" description="Disordered" evidence="5">
    <location>
        <begin position="1"/>
        <end position="21"/>
    </location>
</feature>
<feature type="region of interest" description="Disordered" evidence="5">
    <location>
        <begin position="170"/>
        <end position="419"/>
    </location>
</feature>
<feature type="coiled-coil region" evidence="3">
    <location>
        <begin position="416"/>
        <end position="492"/>
    </location>
</feature>
<feature type="compositionally biased region" description="Basic and acidic residues" evidence="5">
    <location>
        <begin position="1"/>
        <end position="11"/>
    </location>
</feature>
<feature type="compositionally biased region" description="Pro residues" evidence="5">
    <location>
        <begin position="201"/>
        <end position="212"/>
    </location>
</feature>
<feature type="compositionally biased region" description="Low complexity" evidence="5">
    <location>
        <begin position="229"/>
        <end position="238"/>
    </location>
</feature>
<feature type="compositionally biased region" description="Acidic residues" evidence="5">
    <location>
        <begin position="246"/>
        <end position="258"/>
    </location>
</feature>
<feature type="compositionally biased region" description="Low complexity" evidence="5">
    <location>
        <begin position="329"/>
        <end position="349"/>
    </location>
</feature>
<feature type="compositionally biased region" description="Low complexity" evidence="5">
    <location>
        <begin position="367"/>
        <end position="386"/>
    </location>
</feature>
<feature type="modified residue" description="Phosphoserine" evidence="2">
    <location>
        <position position="167"/>
    </location>
</feature>
<feature type="modified residue" description="Phosphoserine" evidence="1">
    <location>
        <position position="237"/>
    </location>
</feature>
<feature type="modified residue" description="Phosphoserine" evidence="1">
    <location>
        <position position="238"/>
    </location>
</feature>
<feature type="modified residue" description="Phosphoserine" evidence="2">
    <location>
        <position position="273"/>
    </location>
</feature>
<feature type="modified residue" description="Phosphothreonine" evidence="1">
    <location>
        <position position="298"/>
    </location>
</feature>
<feature type="modified residue" description="Phosphothreonine" evidence="2">
    <location>
        <position position="311"/>
    </location>
</feature>
<feature type="modified residue" description="Phosphoserine" evidence="2">
    <location>
        <position position="399"/>
    </location>
</feature>
<feature type="sequence conflict" description="In Ref. 2; ABG67060." evidence="6" ref="2">
    <original>G</original>
    <variation>E</variation>
    <location>
        <position position="243"/>
    </location>
</feature>
<evidence type="ECO:0000250" key="1">
    <source>
        <dbReference type="UniProtKB" id="Q8K124"/>
    </source>
</evidence>
<evidence type="ECO:0000250" key="2">
    <source>
        <dbReference type="UniProtKB" id="Q8TD55"/>
    </source>
</evidence>
<evidence type="ECO:0000255" key="3"/>
<evidence type="ECO:0000255" key="4">
    <source>
        <dbReference type="PROSITE-ProRule" id="PRU00145"/>
    </source>
</evidence>
<evidence type="ECO:0000256" key="5">
    <source>
        <dbReference type="SAM" id="MobiDB-lite"/>
    </source>
</evidence>
<evidence type="ECO:0000305" key="6"/>
<proteinExistence type="evidence at transcript level"/>
<gene>
    <name type="primary">PLEKHO2</name>
    <name type="synonym">PLEKHQ1</name>
</gene>